<proteinExistence type="evidence at transcript level"/>
<comment type="function">
    <text evidence="1">Promotes sorting of SMDT1/EMRE in mitochondria by ensuring its maturation. Interacts with the transit peptide region of SMDT1/EMRE precursor protein in the mitochondrial matrix, leading to protect it against protein degradation by YME1L1, thereby ensuring SMDT1/EMRE maturation by the mitochondrial processing peptidase (PMPCA and PMPCB).</text>
</comment>
<comment type="subunit">
    <text evidence="1">Interacts with AFG3L2. Interacts with SPG7. Interacts with SMDT1/EMRE (via the N-terminal transit peptide); interaction is direct and takes place before maturation of SMDT1/EMRE.</text>
</comment>
<comment type="subcellular location">
    <subcellularLocation>
        <location evidence="1">Mitochondrion matrix</location>
    </subcellularLocation>
</comment>
<feature type="transit peptide" description="Mitochondrion" evidence="2">
    <location>
        <begin position="1"/>
        <end position="96"/>
    </location>
</feature>
<feature type="chain" id="PRO_0000301947" description="m-AAA protease-interacting protein 1, mitochondrial">
    <location>
        <begin position="97"/>
        <end position="291"/>
    </location>
</feature>
<reference key="1">
    <citation type="journal article" date="2004" name="Genome Res.">
        <title>The status, quality, and expansion of the NIH full-length cDNA project: the Mammalian Gene Collection (MGC).</title>
        <authorList>
            <consortium name="The MGC Project Team"/>
        </authorList>
    </citation>
    <scope>NUCLEOTIDE SEQUENCE [LARGE SCALE MRNA]</scope>
    <source>
        <tissue>Testis</tissue>
    </source>
</reference>
<organism>
    <name type="scientific">Rattus norvegicus</name>
    <name type="common">Rat</name>
    <dbReference type="NCBI Taxonomy" id="10116"/>
    <lineage>
        <taxon>Eukaryota</taxon>
        <taxon>Metazoa</taxon>
        <taxon>Chordata</taxon>
        <taxon>Craniata</taxon>
        <taxon>Vertebrata</taxon>
        <taxon>Euteleostomi</taxon>
        <taxon>Mammalia</taxon>
        <taxon>Eutheria</taxon>
        <taxon>Euarchontoglires</taxon>
        <taxon>Glires</taxon>
        <taxon>Rodentia</taxon>
        <taxon>Myomorpha</taxon>
        <taxon>Muroidea</taxon>
        <taxon>Muridae</taxon>
        <taxon>Murinae</taxon>
        <taxon>Rattus</taxon>
    </lineage>
</organism>
<protein>
    <recommendedName>
        <fullName evidence="1">m-AAA protease-interacting protein 1, mitochondrial</fullName>
    </recommendedName>
    <alternativeName>
        <fullName evidence="3">Matrix AAA peptidase-interacting protein 1</fullName>
    </alternativeName>
</protein>
<keyword id="KW-0496">Mitochondrion</keyword>
<keyword id="KW-1185">Reference proteome</keyword>
<keyword id="KW-0809">Transit peptide</keyword>
<accession>Q6AY04</accession>
<sequence>MALAARLLPLPLLSWSLPGRATRLRTLRTTEVKLTLNEFCCLCRRRLGSSAAPIPRCTWAWASPTMRSWGPRRPLLGRAEHSPALASLPASPIRSYSTEEQPQQRQRTRMIILGFSNPINWVRTRIYAFLIWAYFDKEFSIAEFSEGAKQAFAYVSKLLSQCKFDLLEELVAKEVLQVLKEKVASLSDNHKNALAADIDDIVYTSTGDISIYYDEKGRKFVNILMCFWYLTSANIPSESLSGANVFQVKLGDQSVETKQLLSASYEFQREFTQGVKPDWTIARIEHSKLLE</sequence>
<gene>
    <name evidence="3" type="primary">Maip1</name>
</gene>
<dbReference type="EMBL" id="BC079246">
    <property type="protein sequence ID" value="AAH79246.1"/>
    <property type="molecule type" value="mRNA"/>
</dbReference>
<dbReference type="RefSeq" id="NP_001004251.1">
    <property type="nucleotide sequence ID" value="NM_001004251.1"/>
</dbReference>
<dbReference type="FunCoup" id="Q6AY04">
    <property type="interactions" value="1344"/>
</dbReference>
<dbReference type="STRING" id="10116.ENSRNOP00000021533"/>
<dbReference type="iPTMnet" id="Q6AY04"/>
<dbReference type="PhosphoSitePlus" id="Q6AY04"/>
<dbReference type="jPOST" id="Q6AY04"/>
<dbReference type="PaxDb" id="10116-ENSRNOP00000021533"/>
<dbReference type="Ensembl" id="ENSRNOT00000021533.6">
    <property type="protein sequence ID" value="ENSRNOP00000021533.5"/>
    <property type="gene ID" value="ENSRNOG00000015983.6"/>
</dbReference>
<dbReference type="GeneID" id="301418"/>
<dbReference type="KEGG" id="rno:301418"/>
<dbReference type="UCSC" id="RGD:1303159">
    <property type="organism name" value="rat"/>
</dbReference>
<dbReference type="AGR" id="RGD:1303159"/>
<dbReference type="CTD" id="79568"/>
<dbReference type="RGD" id="1303159">
    <property type="gene designation" value="Maip1"/>
</dbReference>
<dbReference type="eggNOG" id="ENOG502QR8E">
    <property type="taxonomic scope" value="Eukaryota"/>
</dbReference>
<dbReference type="GeneTree" id="ENSGT00390000004145"/>
<dbReference type="HOGENOM" id="CLU_083348_0_0_1"/>
<dbReference type="InParanoid" id="Q6AY04"/>
<dbReference type="OMA" id="SILMCFW"/>
<dbReference type="OrthoDB" id="7249367at2759"/>
<dbReference type="PhylomeDB" id="Q6AY04"/>
<dbReference type="Reactome" id="R-RNO-8949664">
    <property type="pathway name" value="Processing of SMDT1"/>
</dbReference>
<dbReference type="PRO" id="PR:Q6AY04"/>
<dbReference type="Proteomes" id="UP000002494">
    <property type="component" value="Chromosome 9"/>
</dbReference>
<dbReference type="Bgee" id="ENSRNOG00000015983">
    <property type="expression patterns" value="Expressed in quadriceps femoris and 19 other cell types or tissues"/>
</dbReference>
<dbReference type="GO" id="GO:0005743">
    <property type="term" value="C:mitochondrial inner membrane"/>
    <property type="evidence" value="ECO:0000318"/>
    <property type="project" value="GO_Central"/>
</dbReference>
<dbReference type="GO" id="GO:0005759">
    <property type="term" value="C:mitochondrial matrix"/>
    <property type="evidence" value="ECO:0000250"/>
    <property type="project" value="UniProtKB"/>
</dbReference>
<dbReference type="GO" id="GO:0043022">
    <property type="term" value="F:ribosome binding"/>
    <property type="evidence" value="ECO:0000318"/>
    <property type="project" value="GO_Central"/>
</dbReference>
<dbReference type="GO" id="GO:0036444">
    <property type="term" value="P:calcium import into the mitochondrion"/>
    <property type="evidence" value="ECO:0000250"/>
    <property type="project" value="UniProtKB"/>
</dbReference>
<dbReference type="GO" id="GO:0051560">
    <property type="term" value="P:mitochondrial calcium ion homeostasis"/>
    <property type="evidence" value="ECO:0000250"/>
    <property type="project" value="UniProtKB"/>
</dbReference>
<dbReference type="GO" id="GO:0032979">
    <property type="term" value="P:protein insertion into mitochondrial inner membrane from matrix"/>
    <property type="evidence" value="ECO:0000318"/>
    <property type="project" value="GO_Central"/>
</dbReference>
<dbReference type="GO" id="GO:0051204">
    <property type="term" value="P:protein insertion into mitochondrial membrane"/>
    <property type="evidence" value="ECO:0000250"/>
    <property type="project" value="UniProtKB"/>
</dbReference>
<dbReference type="PANTHER" id="PTHR13333">
    <property type="entry name" value="M-AAA PROTEASE-INTERACTING PROTEIN 1, MITOCHONDRIAL"/>
    <property type="match status" value="1"/>
</dbReference>
<dbReference type="PANTHER" id="PTHR13333:SF5">
    <property type="entry name" value="M-AAA PROTEASE-INTERACTING PROTEIN 1, MITOCHONDRIAL"/>
    <property type="match status" value="1"/>
</dbReference>
<evidence type="ECO:0000250" key="1">
    <source>
        <dbReference type="UniProtKB" id="Q8WWC4"/>
    </source>
</evidence>
<evidence type="ECO:0000255" key="2"/>
<evidence type="ECO:0000312" key="3">
    <source>
        <dbReference type="RGD" id="1303159"/>
    </source>
</evidence>
<name>MAIP1_RAT</name>